<keyword id="KW-0350">Heme biosynthesis</keyword>
<keyword id="KW-0456">Lyase</keyword>
<keyword id="KW-0460">Magnesium</keyword>
<keyword id="KW-0479">Metal-binding</keyword>
<keyword id="KW-0627">Porphyrin biosynthesis</keyword>
<keyword id="KW-1185">Reference proteome</keyword>
<name>HEM2_BRADU</name>
<protein>
    <recommendedName>
        <fullName>Delta-aminolevulinic acid dehydratase</fullName>
        <shortName>ALAD</shortName>
        <shortName>ALADH</shortName>
        <ecNumber>4.2.1.24</ecNumber>
    </recommendedName>
    <alternativeName>
        <fullName>Porphobilinogen synthase</fullName>
    </alternativeName>
</protein>
<reference key="1">
    <citation type="journal article" date="1993" name="J. Bacteriol.">
        <title>Bradyrhizobium japonicum delta-aminolevulinic acid dehydratase is essential for symbiosis with soybean and contains a novel metal-binding domain.</title>
        <authorList>
            <person name="Chauhan S."/>
            <person name="O'Brian M.R."/>
        </authorList>
    </citation>
    <scope>NUCLEOTIDE SEQUENCE [GENOMIC DNA]</scope>
    <scope>CATALYTIC ACTIVITY</scope>
    <scope>FUNCTION</scope>
    <scope>COFACTOR</scope>
    <source>
        <strain>I110</strain>
    </source>
</reference>
<reference key="2">
    <citation type="journal article" date="2002" name="DNA Res.">
        <title>Complete genomic sequence of nitrogen-fixing symbiotic bacterium Bradyrhizobium japonicum USDA110.</title>
        <authorList>
            <person name="Kaneko T."/>
            <person name="Nakamura Y."/>
            <person name="Sato S."/>
            <person name="Minamisawa K."/>
            <person name="Uchiumi T."/>
            <person name="Sasamoto S."/>
            <person name="Watanabe A."/>
            <person name="Idesawa K."/>
            <person name="Iriguchi M."/>
            <person name="Kawashima K."/>
            <person name="Kohara M."/>
            <person name="Matsumoto M."/>
            <person name="Shimpo S."/>
            <person name="Tsuruoka H."/>
            <person name="Wada T."/>
            <person name="Yamada M."/>
            <person name="Tabata S."/>
        </authorList>
    </citation>
    <scope>NUCLEOTIDE SEQUENCE [LARGE SCALE GENOMIC DNA]</scope>
    <source>
        <strain>JCM 10833 / BCRC 13528 / IAM 13628 / NBRC 14792 / USDA 110</strain>
    </source>
</reference>
<comment type="function">
    <text evidence="2">Catalyzes an early step in the biosynthesis of tetrapyrroles. Binds two molecules of 5-aminolevulinate per subunit, each at a distinct site, and catalyzes their condensation to form porphobilinogen. Required for nodule development.</text>
</comment>
<comment type="catalytic activity">
    <reaction evidence="2">
        <text>2 5-aminolevulinate = porphobilinogen + 2 H2O + H(+)</text>
        <dbReference type="Rhea" id="RHEA:24064"/>
        <dbReference type="ChEBI" id="CHEBI:15377"/>
        <dbReference type="ChEBI" id="CHEBI:15378"/>
        <dbReference type="ChEBI" id="CHEBI:58126"/>
        <dbReference type="ChEBI" id="CHEBI:356416"/>
        <dbReference type="EC" id="4.2.1.24"/>
    </reaction>
</comment>
<comment type="cofactor">
    <cofactor evidence="2">
        <name>Mg(2+)</name>
        <dbReference type="ChEBI" id="CHEBI:18420"/>
    </cofactor>
</comment>
<comment type="pathway">
    <text>Porphyrin-containing compound metabolism; protoporphyrin-IX biosynthesis; coproporphyrinogen-III from 5-aminolevulinate: step 1/4.</text>
</comment>
<comment type="subunit">
    <text evidence="1">Homooctamer.</text>
</comment>
<comment type="similarity">
    <text evidence="3">Belongs to the ALAD family.</text>
</comment>
<comment type="sequence caution" evidence="3">
    <conflict type="erroneous initiation">
        <sequence resource="EMBL-CDS" id="BAC50302"/>
    </conflict>
</comment>
<feature type="chain" id="PRO_0000140494" description="Delta-aminolevulinic acid dehydratase">
    <location>
        <begin position="1"/>
        <end position="353"/>
    </location>
</feature>
<feature type="active site" description="Schiff-base intermediate with substrate" evidence="1">
    <location>
        <position position="221"/>
    </location>
</feature>
<feature type="active site" description="Schiff-base intermediate with substrate" evidence="1">
    <location>
        <position position="275"/>
    </location>
</feature>
<feature type="binding site" evidence="1">
    <location>
        <position position="231"/>
    </location>
    <ligand>
        <name>5-aminolevulinate</name>
        <dbReference type="ChEBI" id="CHEBI:356416"/>
        <label>1</label>
    </ligand>
</feature>
<feature type="binding site" evidence="1">
    <location>
        <position position="244"/>
    </location>
    <ligand>
        <name>5-aminolevulinate</name>
        <dbReference type="ChEBI" id="CHEBI:356416"/>
        <label>1</label>
    </ligand>
</feature>
<feature type="binding site" evidence="1">
    <location>
        <position position="260"/>
    </location>
    <ligand>
        <name>Mg(2+)</name>
        <dbReference type="ChEBI" id="CHEBI:18420"/>
    </ligand>
</feature>
<feature type="binding site" evidence="1">
    <location>
        <position position="301"/>
    </location>
    <ligand>
        <name>5-aminolevulinate</name>
        <dbReference type="ChEBI" id="CHEBI:356416"/>
        <label>2</label>
    </ligand>
</feature>
<feature type="binding site" evidence="1">
    <location>
        <position position="340"/>
    </location>
    <ligand>
        <name>5-aminolevulinate</name>
        <dbReference type="ChEBI" id="CHEBI:356416"/>
        <label>2</label>
    </ligand>
</feature>
<sequence length="353" mass="38582">MAIKYGRPIELREVSRRDGAAASPALDLAIRPRRNRKAEWARRMVRENVLTTDDLIWPLFLIDGNNKREQIASMPGVERLSVDQAVREAERAMKLTIPCIALFPYTDPSLRDEEGSEACNPNNLVCQAVRAIKKEFPEIGVLCDVALDPFTSHGHDGLIADGAILNDETVAVLVRQALVQAEAGCDIIAPSDMMDGRVAAIREGLDQAGLIDVQIMAYAAKYASAFYGPFRDAIGSAKTLTGDKRTYQMDSANTDEALREVELDISEGADMVMVKPGMPYLDVVRRVKDTFAMPTFAYQVSGEYAMIAAAAGNGWLDGDRAMMESLLAFKRAGADGVLSYFAPKAAEKLRTQG</sequence>
<accession>P45622</accession>
<organism>
    <name type="scientific">Bradyrhizobium diazoefficiens (strain JCM 10833 / BCRC 13528 / IAM 13628 / NBRC 14792 / USDA 110)</name>
    <dbReference type="NCBI Taxonomy" id="224911"/>
    <lineage>
        <taxon>Bacteria</taxon>
        <taxon>Pseudomonadati</taxon>
        <taxon>Pseudomonadota</taxon>
        <taxon>Alphaproteobacteria</taxon>
        <taxon>Hyphomicrobiales</taxon>
        <taxon>Nitrobacteraceae</taxon>
        <taxon>Bradyrhizobium</taxon>
    </lineage>
</organism>
<gene>
    <name type="primary">hemB</name>
    <name type="ordered locus">blr5037</name>
</gene>
<evidence type="ECO:0000250" key="1"/>
<evidence type="ECO:0000269" key="2">
    <source>
    </source>
</evidence>
<evidence type="ECO:0000305" key="3"/>
<dbReference type="EC" id="4.2.1.24"/>
<dbReference type="EMBL" id="L24386">
    <property type="protein sequence ID" value="AAA89067.1"/>
    <property type="molecule type" value="Genomic_DNA"/>
</dbReference>
<dbReference type="EMBL" id="BA000040">
    <property type="protein sequence ID" value="BAC50302.1"/>
    <property type="status" value="ALT_INIT"/>
    <property type="molecule type" value="Genomic_DNA"/>
</dbReference>
<dbReference type="PIR" id="A49925">
    <property type="entry name" value="A49925"/>
</dbReference>
<dbReference type="RefSeq" id="NP_771677.2">
    <property type="nucleotide sequence ID" value="NC_004463.1"/>
</dbReference>
<dbReference type="RefSeq" id="WP_038966342.1">
    <property type="nucleotide sequence ID" value="NC_004463.1"/>
</dbReference>
<dbReference type="SMR" id="P45622"/>
<dbReference type="FunCoup" id="P45622">
    <property type="interactions" value="702"/>
</dbReference>
<dbReference type="STRING" id="224911.AAV28_22550"/>
<dbReference type="EnsemblBacteria" id="BAC50302">
    <property type="protein sequence ID" value="BAC50302"/>
    <property type="gene ID" value="BAC50302"/>
</dbReference>
<dbReference type="GeneID" id="46492043"/>
<dbReference type="KEGG" id="bja:blr5037"/>
<dbReference type="PATRIC" id="fig|224911.44.peg.4902"/>
<dbReference type="eggNOG" id="COG0113">
    <property type="taxonomic scope" value="Bacteria"/>
</dbReference>
<dbReference type="HOGENOM" id="CLU_470668_0_0_5"/>
<dbReference type="InParanoid" id="P45622"/>
<dbReference type="OrthoDB" id="9805001at2"/>
<dbReference type="UniPathway" id="UPA00251">
    <property type="reaction ID" value="UER00318"/>
</dbReference>
<dbReference type="Proteomes" id="UP000002526">
    <property type="component" value="Chromosome"/>
</dbReference>
<dbReference type="GO" id="GO:0005829">
    <property type="term" value="C:cytosol"/>
    <property type="evidence" value="ECO:0000318"/>
    <property type="project" value="GO_Central"/>
</dbReference>
<dbReference type="GO" id="GO:0004655">
    <property type="term" value="F:porphobilinogen synthase activity"/>
    <property type="evidence" value="ECO:0000318"/>
    <property type="project" value="GO_Central"/>
</dbReference>
<dbReference type="GO" id="GO:0008270">
    <property type="term" value="F:zinc ion binding"/>
    <property type="evidence" value="ECO:0000318"/>
    <property type="project" value="GO_Central"/>
</dbReference>
<dbReference type="GO" id="GO:0006783">
    <property type="term" value="P:heme biosynthetic process"/>
    <property type="evidence" value="ECO:0000318"/>
    <property type="project" value="GO_Central"/>
</dbReference>
<dbReference type="GO" id="GO:0006782">
    <property type="term" value="P:protoporphyrinogen IX biosynthetic process"/>
    <property type="evidence" value="ECO:0007669"/>
    <property type="project" value="UniProtKB-UniPathway"/>
</dbReference>
<dbReference type="CDD" id="cd04823">
    <property type="entry name" value="ALAD_PBGS_aspartate_rich"/>
    <property type="match status" value="1"/>
</dbReference>
<dbReference type="FunFam" id="3.20.20.70:FF:000019">
    <property type="entry name" value="Delta-aminolevulinic acid dehydratase"/>
    <property type="match status" value="1"/>
</dbReference>
<dbReference type="Gene3D" id="3.20.20.70">
    <property type="entry name" value="Aldolase class I"/>
    <property type="match status" value="1"/>
</dbReference>
<dbReference type="InterPro" id="IPR001731">
    <property type="entry name" value="ALAD"/>
</dbReference>
<dbReference type="InterPro" id="IPR030656">
    <property type="entry name" value="ALAD_AS"/>
</dbReference>
<dbReference type="InterPro" id="IPR013785">
    <property type="entry name" value="Aldolase_TIM"/>
</dbReference>
<dbReference type="NCBIfam" id="NF006762">
    <property type="entry name" value="PRK09283.1"/>
    <property type="match status" value="1"/>
</dbReference>
<dbReference type="PANTHER" id="PTHR11458">
    <property type="entry name" value="DELTA-AMINOLEVULINIC ACID DEHYDRATASE"/>
    <property type="match status" value="1"/>
</dbReference>
<dbReference type="PANTHER" id="PTHR11458:SF0">
    <property type="entry name" value="DELTA-AMINOLEVULINIC ACID DEHYDRATASE"/>
    <property type="match status" value="1"/>
</dbReference>
<dbReference type="Pfam" id="PF00490">
    <property type="entry name" value="ALAD"/>
    <property type="match status" value="1"/>
</dbReference>
<dbReference type="PIRSF" id="PIRSF001415">
    <property type="entry name" value="Porphbilin_synth"/>
    <property type="match status" value="1"/>
</dbReference>
<dbReference type="PRINTS" id="PR00144">
    <property type="entry name" value="DALDHYDRTASE"/>
</dbReference>
<dbReference type="SMART" id="SM01004">
    <property type="entry name" value="ALAD"/>
    <property type="match status" value="1"/>
</dbReference>
<dbReference type="SUPFAM" id="SSF51569">
    <property type="entry name" value="Aldolase"/>
    <property type="match status" value="1"/>
</dbReference>
<dbReference type="PROSITE" id="PS00169">
    <property type="entry name" value="D_ALA_DEHYDRATASE"/>
    <property type="match status" value="1"/>
</dbReference>
<proteinExistence type="evidence at protein level"/>